<name>WNK4_ARATH</name>
<feature type="chain" id="PRO_0000351662" description="Probable serine/threonine-protein kinase WNK4">
    <location>
        <begin position="1"/>
        <end position="571"/>
    </location>
</feature>
<feature type="domain" description="Protein kinase" evidence="4">
    <location>
        <begin position="19"/>
        <end position="277"/>
    </location>
</feature>
<feature type="region of interest" description="Disordered" evidence="5">
    <location>
        <begin position="396"/>
        <end position="425"/>
    </location>
</feature>
<feature type="compositionally biased region" description="Low complexity" evidence="5">
    <location>
        <begin position="412"/>
        <end position="425"/>
    </location>
</feature>
<feature type="active site" description="Proton acceptor" evidence="3">
    <location>
        <position position="166"/>
    </location>
</feature>
<feature type="binding site" evidence="2">
    <location>
        <begin position="99"/>
        <end position="102"/>
    </location>
    <ligand>
        <name>ATP</name>
        <dbReference type="ChEBI" id="CHEBI:30616"/>
    </ligand>
</feature>
<feature type="binding site" evidence="2">
    <location>
        <position position="149"/>
    </location>
    <ligand>
        <name>ATP</name>
        <dbReference type="ChEBI" id="CHEBI:30616"/>
    </ligand>
</feature>
<feature type="modified residue" description="Phosphoserine" evidence="7 8">
    <location>
        <position position="522"/>
    </location>
</feature>
<organism>
    <name type="scientific">Arabidopsis thaliana</name>
    <name type="common">Mouse-ear cress</name>
    <dbReference type="NCBI Taxonomy" id="3702"/>
    <lineage>
        <taxon>Eukaryota</taxon>
        <taxon>Viridiplantae</taxon>
        <taxon>Streptophyta</taxon>
        <taxon>Embryophyta</taxon>
        <taxon>Tracheophyta</taxon>
        <taxon>Spermatophyta</taxon>
        <taxon>Magnoliopsida</taxon>
        <taxon>eudicotyledons</taxon>
        <taxon>Gunneridae</taxon>
        <taxon>Pentapetalae</taxon>
        <taxon>rosids</taxon>
        <taxon>malvids</taxon>
        <taxon>Brassicales</taxon>
        <taxon>Brassicaceae</taxon>
        <taxon>Camelineae</taxon>
        <taxon>Arabidopsis</taxon>
    </lineage>
</organism>
<protein>
    <recommendedName>
        <fullName>Probable serine/threonine-protein kinase WNK4</fullName>
        <shortName>AtWNK4</shortName>
        <ecNumber>2.7.11.1</ecNumber>
    </recommendedName>
    <alternativeName>
        <fullName>Protein kinase with no lysine 4</fullName>
    </alternativeName>
</protein>
<proteinExistence type="evidence at protein level"/>
<gene>
    <name type="primary">WNK4</name>
    <name type="ordered locus">At5g58350</name>
    <name type="ORF">MCK7.22</name>
</gene>
<accession>Q9LVL5</accession>
<evidence type="ECO:0000250" key="1"/>
<evidence type="ECO:0000250" key="2">
    <source>
        <dbReference type="UniProtKB" id="Q9H4A3"/>
    </source>
</evidence>
<evidence type="ECO:0000250" key="3">
    <source>
        <dbReference type="UniProtKB" id="Q9JIH7"/>
    </source>
</evidence>
<evidence type="ECO:0000255" key="4">
    <source>
        <dbReference type="PROSITE-ProRule" id="PRU00159"/>
    </source>
</evidence>
<evidence type="ECO:0000256" key="5">
    <source>
        <dbReference type="SAM" id="MobiDB-lite"/>
    </source>
</evidence>
<evidence type="ECO:0000269" key="6">
    <source>
    </source>
</evidence>
<evidence type="ECO:0007744" key="7">
    <source>
    </source>
</evidence>
<evidence type="ECO:0007744" key="8">
    <source>
    </source>
</evidence>
<reference key="1">
    <citation type="journal article" date="2002" name="Biosci. Biotechnol. Biochem.">
        <title>Compilation and characterization of a novel WNK family of protein kinases in Arabiodpsis thaliana with reference to circadian rhythms.</title>
        <authorList>
            <person name="Nakamichi N."/>
            <person name="Murakami-Kojima M."/>
            <person name="Sato E."/>
            <person name="Kishi Y."/>
            <person name="Yamashino T."/>
            <person name="Mizuno T."/>
        </authorList>
    </citation>
    <scope>NUCLEOTIDE SEQUENCE [MRNA]</scope>
    <scope>INDUCTION</scope>
    <source>
        <strain>cv. Columbia</strain>
    </source>
</reference>
<reference key="2">
    <citation type="journal article" date="2000" name="DNA Res.">
        <title>Structural analysis of Arabidopsis thaliana chromosome 5. X. Sequence features of the regions of 3,076,755 bp covered by sixty P1 and TAC clones.</title>
        <authorList>
            <person name="Sato S."/>
            <person name="Nakamura Y."/>
            <person name="Kaneko T."/>
            <person name="Katoh T."/>
            <person name="Asamizu E."/>
            <person name="Kotani H."/>
            <person name="Tabata S."/>
        </authorList>
    </citation>
    <scope>NUCLEOTIDE SEQUENCE [LARGE SCALE GENOMIC DNA]</scope>
    <source>
        <strain>cv. Columbia</strain>
    </source>
</reference>
<reference key="3">
    <citation type="journal article" date="2017" name="Plant J.">
        <title>Araport11: a complete reannotation of the Arabidopsis thaliana reference genome.</title>
        <authorList>
            <person name="Cheng C.Y."/>
            <person name="Krishnakumar V."/>
            <person name="Chan A.P."/>
            <person name="Thibaud-Nissen F."/>
            <person name="Schobel S."/>
            <person name="Town C.D."/>
        </authorList>
    </citation>
    <scope>GENOME REANNOTATION</scope>
    <source>
        <strain>cv. Columbia</strain>
    </source>
</reference>
<reference key="4">
    <citation type="journal article" date="2003" name="Science">
        <title>Empirical analysis of transcriptional activity in the Arabidopsis genome.</title>
        <authorList>
            <person name="Yamada K."/>
            <person name="Lim J."/>
            <person name="Dale J.M."/>
            <person name="Chen H."/>
            <person name="Shinn P."/>
            <person name="Palm C.J."/>
            <person name="Southwick A.M."/>
            <person name="Wu H.C."/>
            <person name="Kim C.J."/>
            <person name="Nguyen M."/>
            <person name="Pham P.K."/>
            <person name="Cheuk R.F."/>
            <person name="Karlin-Newmann G."/>
            <person name="Liu S.X."/>
            <person name="Lam B."/>
            <person name="Sakano H."/>
            <person name="Wu T."/>
            <person name="Yu G."/>
            <person name="Miranda M."/>
            <person name="Quach H.L."/>
            <person name="Tripp M."/>
            <person name="Chang C.H."/>
            <person name="Lee J.M."/>
            <person name="Toriumi M.J."/>
            <person name="Chan M.M."/>
            <person name="Tang C.C."/>
            <person name="Onodera C.S."/>
            <person name="Deng J.M."/>
            <person name="Akiyama K."/>
            <person name="Ansari Y."/>
            <person name="Arakawa T."/>
            <person name="Banh J."/>
            <person name="Banno F."/>
            <person name="Bowser L."/>
            <person name="Brooks S.Y."/>
            <person name="Carninci P."/>
            <person name="Chao Q."/>
            <person name="Choy N."/>
            <person name="Enju A."/>
            <person name="Goldsmith A.D."/>
            <person name="Gurjal M."/>
            <person name="Hansen N.F."/>
            <person name="Hayashizaki Y."/>
            <person name="Johnson-Hopson C."/>
            <person name="Hsuan V.W."/>
            <person name="Iida K."/>
            <person name="Karnes M."/>
            <person name="Khan S."/>
            <person name="Koesema E."/>
            <person name="Ishida J."/>
            <person name="Jiang P.X."/>
            <person name="Jones T."/>
            <person name="Kawai J."/>
            <person name="Kamiya A."/>
            <person name="Meyers C."/>
            <person name="Nakajima M."/>
            <person name="Narusaka M."/>
            <person name="Seki M."/>
            <person name="Sakurai T."/>
            <person name="Satou M."/>
            <person name="Tamse R."/>
            <person name="Vaysberg M."/>
            <person name="Wallender E.K."/>
            <person name="Wong C."/>
            <person name="Yamamura Y."/>
            <person name="Yuan S."/>
            <person name="Shinozaki K."/>
            <person name="Davis R.W."/>
            <person name="Theologis A."/>
            <person name="Ecker J.R."/>
        </authorList>
    </citation>
    <scope>NUCLEOTIDE SEQUENCE [LARGE SCALE MRNA]</scope>
    <source>
        <strain>cv. Columbia</strain>
    </source>
</reference>
<reference key="5">
    <citation type="journal article" date="2009" name="J. Proteomics">
        <title>Phosphoproteomic analysis of nuclei-enriched fractions from Arabidopsis thaliana.</title>
        <authorList>
            <person name="Jones A.M.E."/>
            <person name="MacLean D."/>
            <person name="Studholme D.J."/>
            <person name="Serna-Sanz A."/>
            <person name="Andreasson E."/>
            <person name="Rathjen J.P."/>
            <person name="Peck S.C."/>
        </authorList>
    </citation>
    <scope>PHOSPHORYLATION [LARGE SCALE ANALYSIS] AT SER-522</scope>
    <scope>IDENTIFICATION BY MASS SPECTROMETRY [LARGE SCALE ANALYSIS]</scope>
    <source>
        <strain>cv. Columbia</strain>
    </source>
</reference>
<reference key="6">
    <citation type="journal article" date="2009" name="Plant Physiol.">
        <title>Large-scale Arabidopsis phosphoproteome profiling reveals novel chloroplast kinase substrates and phosphorylation networks.</title>
        <authorList>
            <person name="Reiland S."/>
            <person name="Messerli G."/>
            <person name="Baerenfaller K."/>
            <person name="Gerrits B."/>
            <person name="Endler A."/>
            <person name="Grossmann J."/>
            <person name="Gruissem W."/>
            <person name="Baginsky S."/>
        </authorList>
    </citation>
    <scope>PHOSPHORYLATION [LARGE SCALE ANALYSIS] AT SER-522</scope>
    <scope>IDENTIFICATION BY MASS SPECTROMETRY [LARGE SCALE ANALYSIS]</scope>
</reference>
<sequence length="571" mass="64914">MNMNQVAEYVETDPTGRYGRFAEILGRGAMKTVYKAIDEKLGIEVAWSQVKLKEVLRSSVDLQRLYSEVHLLSTLNHKSIIRFYTSWIDVHNHTLNFITELFTSGTLRQYKNKYLRIDIRAIKSWARQILEGLVYLHEHDPPVIHRDLKCDNIFVNGHLGQVKIGDLGLARMLRDCHSAHSIIGTPEFMAPELYEENYNELIDVYSFGMCFLEMITSEFPYSECNHPAQIYKKVVGGKLPGAFYRVGDIEAQRFIGKCLVSASKRVSAKELLQDPFLASDESWMVYTSGAGNPKPFLNENEMDTLKLEDDELRTEMSIAGKLGAEDNKIDLEVQIAYDNGLANNVFFPFDIMNDTSIDVAKEMVKELEIIDWEPVEIAKMIDGAISSLVSDWKYEEDDETPHDHHRHRTDSFHSSSSHASSSQASLSNYMARGLQDWVQDDLHDETYSQSSSHSGSYSNLNYIAVDEYSSQSPVMSRTHNMTRFCPEESSHLQSGQANAYAASSSTNRSLASDNRTLTRNRSLVDVQRQLLHRSPGEEARKRRLFKTVGDVETVGFQSPYAVSRKPPSSRR</sequence>
<comment type="function">
    <text evidence="1">May regulate flowering time by modulating the photoperiod pathway.</text>
</comment>
<comment type="catalytic activity">
    <reaction>
        <text>L-seryl-[protein] + ATP = O-phospho-L-seryl-[protein] + ADP + H(+)</text>
        <dbReference type="Rhea" id="RHEA:17989"/>
        <dbReference type="Rhea" id="RHEA-COMP:9863"/>
        <dbReference type="Rhea" id="RHEA-COMP:11604"/>
        <dbReference type="ChEBI" id="CHEBI:15378"/>
        <dbReference type="ChEBI" id="CHEBI:29999"/>
        <dbReference type="ChEBI" id="CHEBI:30616"/>
        <dbReference type="ChEBI" id="CHEBI:83421"/>
        <dbReference type="ChEBI" id="CHEBI:456216"/>
        <dbReference type="EC" id="2.7.11.1"/>
    </reaction>
</comment>
<comment type="catalytic activity">
    <reaction>
        <text>L-threonyl-[protein] + ATP = O-phospho-L-threonyl-[protein] + ADP + H(+)</text>
        <dbReference type="Rhea" id="RHEA:46608"/>
        <dbReference type="Rhea" id="RHEA-COMP:11060"/>
        <dbReference type="Rhea" id="RHEA-COMP:11605"/>
        <dbReference type="ChEBI" id="CHEBI:15378"/>
        <dbReference type="ChEBI" id="CHEBI:30013"/>
        <dbReference type="ChEBI" id="CHEBI:30616"/>
        <dbReference type="ChEBI" id="CHEBI:61977"/>
        <dbReference type="ChEBI" id="CHEBI:456216"/>
        <dbReference type="EC" id="2.7.11.1"/>
    </reaction>
</comment>
<comment type="induction">
    <text evidence="6">Expressed with a circadian rhythm showing a peak before dawn.</text>
</comment>
<comment type="similarity">
    <text evidence="4">Belongs to the protein kinase superfamily. Ser/Thr protein kinase family. WNK subfamily.</text>
</comment>
<comment type="caution">
    <text evidence="2">Was named WNK/'with no lysine(K)' because key residues for catalysis, including the lysine involved in ATP binding, are either not conserved or differ compared to the residues described in other kinase family proteins.</text>
</comment>
<dbReference type="EC" id="2.7.11.1"/>
<dbReference type="EMBL" id="AB084268">
    <property type="protein sequence ID" value="BAB91127.1"/>
    <property type="molecule type" value="mRNA"/>
</dbReference>
<dbReference type="EMBL" id="AB019228">
    <property type="protein sequence ID" value="BAA96926.1"/>
    <property type="molecule type" value="Genomic_DNA"/>
</dbReference>
<dbReference type="EMBL" id="CP002688">
    <property type="protein sequence ID" value="AED97041.1"/>
    <property type="molecule type" value="Genomic_DNA"/>
</dbReference>
<dbReference type="EMBL" id="AY039910">
    <property type="protein sequence ID" value="AAK64014.1"/>
    <property type="molecule type" value="mRNA"/>
</dbReference>
<dbReference type="EMBL" id="AY081739">
    <property type="protein sequence ID" value="AAL87392.1"/>
    <property type="molecule type" value="mRNA"/>
</dbReference>
<dbReference type="RefSeq" id="NP_200643.1">
    <property type="nucleotide sequence ID" value="NM_125220.4"/>
</dbReference>
<dbReference type="SMR" id="Q9LVL5"/>
<dbReference type="BioGRID" id="21191">
    <property type="interactions" value="3"/>
</dbReference>
<dbReference type="FunCoup" id="Q9LVL5">
    <property type="interactions" value="1734"/>
</dbReference>
<dbReference type="STRING" id="3702.Q9LVL5"/>
<dbReference type="iPTMnet" id="Q9LVL5"/>
<dbReference type="PaxDb" id="3702-AT5G58350.1"/>
<dbReference type="ProteomicsDB" id="242727"/>
<dbReference type="DNASU" id="835947"/>
<dbReference type="EnsemblPlants" id="AT5G58350.1">
    <property type="protein sequence ID" value="AT5G58350.1"/>
    <property type="gene ID" value="AT5G58350"/>
</dbReference>
<dbReference type="GeneID" id="835947"/>
<dbReference type="Gramene" id="AT5G58350.1">
    <property type="protein sequence ID" value="AT5G58350.1"/>
    <property type="gene ID" value="AT5G58350"/>
</dbReference>
<dbReference type="KEGG" id="ath:AT5G58350"/>
<dbReference type="Araport" id="AT5G58350"/>
<dbReference type="TAIR" id="AT5G58350">
    <property type="gene designation" value="WNK4"/>
</dbReference>
<dbReference type="eggNOG" id="KOG0584">
    <property type="taxonomic scope" value="Eukaryota"/>
</dbReference>
<dbReference type="HOGENOM" id="CLU_000288_142_1_1"/>
<dbReference type="InParanoid" id="Q9LVL5"/>
<dbReference type="OMA" id="HDETYSQ"/>
<dbReference type="OrthoDB" id="4062651at2759"/>
<dbReference type="PhylomeDB" id="Q9LVL5"/>
<dbReference type="PRO" id="PR:Q9LVL5"/>
<dbReference type="Proteomes" id="UP000006548">
    <property type="component" value="Chromosome 5"/>
</dbReference>
<dbReference type="ExpressionAtlas" id="Q9LVL5">
    <property type="expression patterns" value="baseline and differential"/>
</dbReference>
<dbReference type="GO" id="GO:0005737">
    <property type="term" value="C:cytoplasm"/>
    <property type="evidence" value="ECO:0007005"/>
    <property type="project" value="TAIR"/>
</dbReference>
<dbReference type="GO" id="GO:0005634">
    <property type="term" value="C:nucleus"/>
    <property type="evidence" value="ECO:0007005"/>
    <property type="project" value="TAIR"/>
</dbReference>
<dbReference type="GO" id="GO:0005524">
    <property type="term" value="F:ATP binding"/>
    <property type="evidence" value="ECO:0007669"/>
    <property type="project" value="UniProtKB-KW"/>
</dbReference>
<dbReference type="GO" id="GO:0004672">
    <property type="term" value="F:protein kinase activity"/>
    <property type="evidence" value="ECO:0000304"/>
    <property type="project" value="TAIR"/>
</dbReference>
<dbReference type="GO" id="GO:0106310">
    <property type="term" value="F:protein serine kinase activity"/>
    <property type="evidence" value="ECO:0007669"/>
    <property type="project" value="RHEA"/>
</dbReference>
<dbReference type="GO" id="GO:0004674">
    <property type="term" value="F:protein serine/threonine kinase activity"/>
    <property type="evidence" value="ECO:0007005"/>
    <property type="project" value="TAIR"/>
</dbReference>
<dbReference type="GO" id="GO:0046777">
    <property type="term" value="P:protein autophosphorylation"/>
    <property type="evidence" value="ECO:0007005"/>
    <property type="project" value="TAIR"/>
</dbReference>
<dbReference type="GO" id="GO:0006468">
    <property type="term" value="P:protein phosphorylation"/>
    <property type="evidence" value="ECO:0000304"/>
    <property type="project" value="TAIR"/>
</dbReference>
<dbReference type="CDD" id="cd13983">
    <property type="entry name" value="STKc_WNK"/>
    <property type="match status" value="1"/>
</dbReference>
<dbReference type="FunFam" id="3.30.200.20:FF:000075">
    <property type="entry name" value="Probable serine/threonine-protein kinase WNK1"/>
    <property type="match status" value="1"/>
</dbReference>
<dbReference type="FunFam" id="1.10.510.10:FF:000046">
    <property type="entry name" value="probable serine/threonine-protein kinase WNK9"/>
    <property type="match status" value="1"/>
</dbReference>
<dbReference type="Gene3D" id="3.30.200.20">
    <property type="entry name" value="Phosphorylase Kinase, domain 1"/>
    <property type="match status" value="1"/>
</dbReference>
<dbReference type="Gene3D" id="1.10.510.10">
    <property type="entry name" value="Transferase(Phosphotransferase) domain 1"/>
    <property type="match status" value="1"/>
</dbReference>
<dbReference type="InterPro" id="IPR011009">
    <property type="entry name" value="Kinase-like_dom_sf"/>
</dbReference>
<dbReference type="InterPro" id="IPR000719">
    <property type="entry name" value="Prot_kinase_dom"/>
</dbReference>
<dbReference type="InterPro" id="IPR008271">
    <property type="entry name" value="Ser/Thr_kinase_AS"/>
</dbReference>
<dbReference type="InterPro" id="IPR050588">
    <property type="entry name" value="WNK_Ser-Thr_kinase"/>
</dbReference>
<dbReference type="PANTHER" id="PTHR13902">
    <property type="entry name" value="SERINE/THREONINE-PROTEIN KINASE WNK WITH NO LYSINE -RELATED"/>
    <property type="match status" value="1"/>
</dbReference>
<dbReference type="Pfam" id="PF00069">
    <property type="entry name" value="Pkinase"/>
    <property type="match status" value="1"/>
</dbReference>
<dbReference type="SMART" id="SM00220">
    <property type="entry name" value="S_TKc"/>
    <property type="match status" value="1"/>
</dbReference>
<dbReference type="SUPFAM" id="SSF56112">
    <property type="entry name" value="Protein kinase-like (PK-like)"/>
    <property type="match status" value="1"/>
</dbReference>
<dbReference type="PROSITE" id="PS50011">
    <property type="entry name" value="PROTEIN_KINASE_DOM"/>
    <property type="match status" value="1"/>
</dbReference>
<dbReference type="PROSITE" id="PS00108">
    <property type="entry name" value="PROTEIN_KINASE_ST"/>
    <property type="match status" value="1"/>
</dbReference>
<keyword id="KW-0067">ATP-binding</keyword>
<keyword id="KW-0418">Kinase</keyword>
<keyword id="KW-0547">Nucleotide-binding</keyword>
<keyword id="KW-0597">Phosphoprotein</keyword>
<keyword id="KW-1185">Reference proteome</keyword>
<keyword id="KW-0723">Serine/threonine-protein kinase</keyword>
<keyword id="KW-0808">Transferase</keyword>